<organism>
    <name type="scientific">Agrobacterium fabrum (strain C58 / ATCC 33970)</name>
    <name type="common">Agrobacterium tumefaciens (strain C58)</name>
    <dbReference type="NCBI Taxonomy" id="176299"/>
    <lineage>
        <taxon>Bacteria</taxon>
        <taxon>Pseudomonadati</taxon>
        <taxon>Pseudomonadota</taxon>
        <taxon>Alphaproteobacteria</taxon>
        <taxon>Hyphomicrobiales</taxon>
        <taxon>Rhizobiaceae</taxon>
        <taxon>Rhizobium/Agrobacterium group</taxon>
        <taxon>Agrobacterium</taxon>
        <taxon>Agrobacterium tumefaciens complex</taxon>
    </lineage>
</organism>
<evidence type="ECO:0000255" key="1">
    <source>
        <dbReference type="HAMAP-Rule" id="MF_00285"/>
    </source>
</evidence>
<proteinExistence type="inferred from homology"/>
<accession>Q8U9D9</accession>
<dbReference type="EC" id="7.2.2.6" evidence="1"/>
<dbReference type="EMBL" id="AE007870">
    <property type="protein sequence ID" value="AAK89619.2"/>
    <property type="molecule type" value="Genomic_DNA"/>
</dbReference>
<dbReference type="PIR" id="A98262">
    <property type="entry name" value="A98262"/>
</dbReference>
<dbReference type="PIR" id="AI3022">
    <property type="entry name" value="AI3022"/>
</dbReference>
<dbReference type="RefSeq" id="NP_356834.2">
    <property type="nucleotide sequence ID" value="NC_003063.2"/>
</dbReference>
<dbReference type="RefSeq" id="WP_010973322.1">
    <property type="nucleotide sequence ID" value="NC_003063.2"/>
</dbReference>
<dbReference type="SMR" id="Q8U9D9"/>
<dbReference type="STRING" id="176299.Atu3789"/>
<dbReference type="EnsemblBacteria" id="AAK89619">
    <property type="protein sequence ID" value="AAK89619"/>
    <property type="gene ID" value="Atu3789"/>
</dbReference>
<dbReference type="GeneID" id="1135663"/>
<dbReference type="KEGG" id="atu:Atu3789"/>
<dbReference type="PATRIC" id="fig|176299.10.peg.3627"/>
<dbReference type="eggNOG" id="COG2216">
    <property type="taxonomic scope" value="Bacteria"/>
</dbReference>
<dbReference type="HOGENOM" id="CLU_025728_2_0_5"/>
<dbReference type="OrthoDB" id="9813266at2"/>
<dbReference type="PhylomeDB" id="Q8U9D9"/>
<dbReference type="BioCyc" id="AGRO:ATU3789-MONOMER"/>
<dbReference type="Proteomes" id="UP000000813">
    <property type="component" value="Chromosome linear"/>
</dbReference>
<dbReference type="GO" id="GO:0005886">
    <property type="term" value="C:plasma membrane"/>
    <property type="evidence" value="ECO:0007669"/>
    <property type="project" value="UniProtKB-SubCell"/>
</dbReference>
<dbReference type="GO" id="GO:0005524">
    <property type="term" value="F:ATP binding"/>
    <property type="evidence" value="ECO:0007669"/>
    <property type="project" value="UniProtKB-UniRule"/>
</dbReference>
<dbReference type="GO" id="GO:0016887">
    <property type="term" value="F:ATP hydrolysis activity"/>
    <property type="evidence" value="ECO:0007669"/>
    <property type="project" value="InterPro"/>
</dbReference>
<dbReference type="GO" id="GO:0000287">
    <property type="term" value="F:magnesium ion binding"/>
    <property type="evidence" value="ECO:0007669"/>
    <property type="project" value="UniProtKB-UniRule"/>
</dbReference>
<dbReference type="GO" id="GO:0008556">
    <property type="term" value="F:P-type potassium transmembrane transporter activity"/>
    <property type="evidence" value="ECO:0007669"/>
    <property type="project" value="UniProtKB-UniRule"/>
</dbReference>
<dbReference type="CDD" id="cd02078">
    <property type="entry name" value="P-type_ATPase_K"/>
    <property type="match status" value="1"/>
</dbReference>
<dbReference type="FunFam" id="2.70.150.10:FF:000033">
    <property type="entry name" value="Potassium-transporting ATPase ATP-binding subunit"/>
    <property type="match status" value="1"/>
</dbReference>
<dbReference type="FunFam" id="3.40.1110.10:FF:000007">
    <property type="entry name" value="Potassium-transporting ATPase ATP-binding subunit"/>
    <property type="match status" value="1"/>
</dbReference>
<dbReference type="Gene3D" id="3.40.1110.10">
    <property type="entry name" value="Calcium-transporting ATPase, cytoplasmic domain N"/>
    <property type="match status" value="1"/>
</dbReference>
<dbReference type="Gene3D" id="2.70.150.10">
    <property type="entry name" value="Calcium-transporting ATPase, cytoplasmic transduction domain A"/>
    <property type="match status" value="1"/>
</dbReference>
<dbReference type="Gene3D" id="3.40.50.1000">
    <property type="entry name" value="HAD superfamily/HAD-like"/>
    <property type="match status" value="1"/>
</dbReference>
<dbReference type="HAMAP" id="MF_00285">
    <property type="entry name" value="KdpB"/>
    <property type="match status" value="1"/>
</dbReference>
<dbReference type="InterPro" id="IPR023299">
    <property type="entry name" value="ATPase_P-typ_cyto_dom_N"/>
</dbReference>
<dbReference type="InterPro" id="IPR018303">
    <property type="entry name" value="ATPase_P-typ_P_site"/>
</dbReference>
<dbReference type="InterPro" id="IPR023298">
    <property type="entry name" value="ATPase_P-typ_TM_dom_sf"/>
</dbReference>
<dbReference type="InterPro" id="IPR008250">
    <property type="entry name" value="ATPase_P-typ_transduc_dom_A_sf"/>
</dbReference>
<dbReference type="InterPro" id="IPR036412">
    <property type="entry name" value="HAD-like_sf"/>
</dbReference>
<dbReference type="InterPro" id="IPR023214">
    <property type="entry name" value="HAD_sf"/>
</dbReference>
<dbReference type="InterPro" id="IPR006391">
    <property type="entry name" value="P-type_ATPase_bsu_IA"/>
</dbReference>
<dbReference type="InterPro" id="IPR001757">
    <property type="entry name" value="P_typ_ATPase"/>
</dbReference>
<dbReference type="InterPro" id="IPR044492">
    <property type="entry name" value="P_typ_ATPase_HD_dom"/>
</dbReference>
<dbReference type="NCBIfam" id="TIGR01494">
    <property type="entry name" value="ATPase_P-type"/>
    <property type="match status" value="2"/>
</dbReference>
<dbReference type="NCBIfam" id="TIGR01497">
    <property type="entry name" value="kdpB"/>
    <property type="match status" value="1"/>
</dbReference>
<dbReference type="PANTHER" id="PTHR43743">
    <property type="entry name" value="POTASSIUM-TRANSPORTING ATPASE ATP-BINDING SUBUNIT"/>
    <property type="match status" value="1"/>
</dbReference>
<dbReference type="PANTHER" id="PTHR43743:SF1">
    <property type="entry name" value="POTASSIUM-TRANSPORTING ATPASE ATP-BINDING SUBUNIT"/>
    <property type="match status" value="1"/>
</dbReference>
<dbReference type="Pfam" id="PF00122">
    <property type="entry name" value="E1-E2_ATPase"/>
    <property type="match status" value="1"/>
</dbReference>
<dbReference type="Pfam" id="PF00702">
    <property type="entry name" value="Hydrolase"/>
    <property type="match status" value="1"/>
</dbReference>
<dbReference type="PRINTS" id="PR00119">
    <property type="entry name" value="CATATPASE"/>
</dbReference>
<dbReference type="SFLD" id="SFLDS00003">
    <property type="entry name" value="Haloacid_Dehalogenase"/>
    <property type="match status" value="1"/>
</dbReference>
<dbReference type="SFLD" id="SFLDF00027">
    <property type="entry name" value="p-type_atpase"/>
    <property type="match status" value="1"/>
</dbReference>
<dbReference type="SUPFAM" id="SSF81653">
    <property type="entry name" value="Calcium ATPase, transduction domain A"/>
    <property type="match status" value="1"/>
</dbReference>
<dbReference type="SUPFAM" id="SSF81665">
    <property type="entry name" value="Calcium ATPase, transmembrane domain M"/>
    <property type="match status" value="1"/>
</dbReference>
<dbReference type="SUPFAM" id="SSF56784">
    <property type="entry name" value="HAD-like"/>
    <property type="match status" value="1"/>
</dbReference>
<dbReference type="SUPFAM" id="SSF81660">
    <property type="entry name" value="Metal cation-transporting ATPase, ATP-binding domain N"/>
    <property type="match status" value="1"/>
</dbReference>
<dbReference type="PROSITE" id="PS00154">
    <property type="entry name" value="ATPASE_E1_E2"/>
    <property type="match status" value="1"/>
</dbReference>
<feature type="chain" id="PRO_0000046108" description="Potassium-transporting ATPase ATP-binding subunit">
    <location>
        <begin position="1"/>
        <end position="694"/>
    </location>
</feature>
<feature type="transmembrane region" description="Helical" evidence="1">
    <location>
        <begin position="36"/>
        <end position="56"/>
    </location>
</feature>
<feature type="transmembrane region" description="Helical" evidence="1">
    <location>
        <begin position="62"/>
        <end position="82"/>
    </location>
</feature>
<feature type="transmembrane region" description="Helical" evidence="1">
    <location>
        <begin position="218"/>
        <end position="238"/>
    </location>
</feature>
<feature type="transmembrane region" description="Helical" evidence="1">
    <location>
        <begin position="249"/>
        <end position="269"/>
    </location>
</feature>
<feature type="transmembrane region" description="Helical" evidence="1">
    <location>
        <begin position="600"/>
        <end position="620"/>
    </location>
</feature>
<feature type="transmembrane region" description="Helical" evidence="1">
    <location>
        <begin position="628"/>
        <end position="648"/>
    </location>
</feature>
<feature type="transmembrane region" description="Helical" evidence="1">
    <location>
        <begin position="666"/>
        <end position="686"/>
    </location>
</feature>
<feature type="active site" description="4-aspartylphosphate intermediate" evidence="1">
    <location>
        <position position="306"/>
    </location>
</feature>
<feature type="binding site" evidence="1">
    <location>
        <position position="343"/>
    </location>
    <ligand>
        <name>ATP</name>
        <dbReference type="ChEBI" id="CHEBI:30616"/>
    </ligand>
</feature>
<feature type="binding site" evidence="1">
    <location>
        <position position="347"/>
    </location>
    <ligand>
        <name>ATP</name>
        <dbReference type="ChEBI" id="CHEBI:30616"/>
    </ligand>
</feature>
<feature type="binding site" evidence="1">
    <location>
        <begin position="376"/>
        <end position="383"/>
    </location>
    <ligand>
        <name>ATP</name>
        <dbReference type="ChEBI" id="CHEBI:30616"/>
    </ligand>
</feature>
<feature type="binding site" evidence="1">
    <location>
        <position position="394"/>
    </location>
    <ligand>
        <name>ATP</name>
        <dbReference type="ChEBI" id="CHEBI:30616"/>
    </ligand>
</feature>
<feature type="binding site" evidence="1">
    <location>
        <position position="530"/>
    </location>
    <ligand>
        <name>Mg(2+)</name>
        <dbReference type="ChEBI" id="CHEBI:18420"/>
    </ligand>
</feature>
<feature type="binding site" evidence="1">
    <location>
        <position position="534"/>
    </location>
    <ligand>
        <name>Mg(2+)</name>
        <dbReference type="ChEBI" id="CHEBI:18420"/>
    </ligand>
</feature>
<comment type="function">
    <text evidence="1">Part of the high-affinity ATP-driven potassium transport (or Kdp) system, which catalyzes the hydrolysis of ATP coupled with the electrogenic transport of potassium into the cytoplasm. This subunit is responsible for energy coupling to the transport system and for the release of the potassium ions to the cytoplasm.</text>
</comment>
<comment type="catalytic activity">
    <reaction evidence="1">
        <text>K(+)(out) + ATP + H2O = K(+)(in) + ADP + phosphate + H(+)</text>
        <dbReference type="Rhea" id="RHEA:16777"/>
        <dbReference type="ChEBI" id="CHEBI:15377"/>
        <dbReference type="ChEBI" id="CHEBI:15378"/>
        <dbReference type="ChEBI" id="CHEBI:29103"/>
        <dbReference type="ChEBI" id="CHEBI:30616"/>
        <dbReference type="ChEBI" id="CHEBI:43474"/>
        <dbReference type="ChEBI" id="CHEBI:456216"/>
        <dbReference type="EC" id="7.2.2.6"/>
    </reaction>
    <physiologicalReaction direction="left-to-right" evidence="1">
        <dbReference type="Rhea" id="RHEA:16778"/>
    </physiologicalReaction>
</comment>
<comment type="subunit">
    <text evidence="1">The system is composed of three essential subunits: KdpA, KdpB and KdpC.</text>
</comment>
<comment type="subcellular location">
    <subcellularLocation>
        <location evidence="1">Cell inner membrane</location>
        <topology evidence="1">Multi-pass membrane protein</topology>
    </subcellularLocation>
</comment>
<comment type="similarity">
    <text evidence="1">Belongs to the cation transport ATPase (P-type) (TC 3.A.3) family. Type IA subfamily.</text>
</comment>
<reference key="1">
    <citation type="journal article" date="2001" name="Science">
        <title>The genome of the natural genetic engineer Agrobacterium tumefaciens C58.</title>
        <authorList>
            <person name="Wood D.W."/>
            <person name="Setubal J.C."/>
            <person name="Kaul R."/>
            <person name="Monks D.E."/>
            <person name="Kitajima J.P."/>
            <person name="Okura V.K."/>
            <person name="Zhou Y."/>
            <person name="Chen L."/>
            <person name="Wood G.E."/>
            <person name="Almeida N.F. Jr."/>
            <person name="Woo L."/>
            <person name="Chen Y."/>
            <person name="Paulsen I.T."/>
            <person name="Eisen J.A."/>
            <person name="Karp P.D."/>
            <person name="Bovee D. Sr."/>
            <person name="Chapman P."/>
            <person name="Clendenning J."/>
            <person name="Deatherage G."/>
            <person name="Gillet W."/>
            <person name="Grant C."/>
            <person name="Kutyavin T."/>
            <person name="Levy R."/>
            <person name="Li M.-J."/>
            <person name="McClelland E."/>
            <person name="Palmieri A."/>
            <person name="Raymond C."/>
            <person name="Rouse G."/>
            <person name="Saenphimmachak C."/>
            <person name="Wu Z."/>
            <person name="Romero P."/>
            <person name="Gordon D."/>
            <person name="Zhang S."/>
            <person name="Yoo H."/>
            <person name="Tao Y."/>
            <person name="Biddle P."/>
            <person name="Jung M."/>
            <person name="Krespan W."/>
            <person name="Perry M."/>
            <person name="Gordon-Kamm B."/>
            <person name="Liao L."/>
            <person name="Kim S."/>
            <person name="Hendrick C."/>
            <person name="Zhao Z.-Y."/>
            <person name="Dolan M."/>
            <person name="Chumley F."/>
            <person name="Tingey S.V."/>
            <person name="Tomb J.-F."/>
            <person name="Gordon M.P."/>
            <person name="Olson M.V."/>
            <person name="Nester E.W."/>
        </authorList>
    </citation>
    <scope>NUCLEOTIDE SEQUENCE [LARGE SCALE GENOMIC DNA]</scope>
    <source>
        <strain>C58 / ATCC 33970</strain>
    </source>
</reference>
<reference key="2">
    <citation type="journal article" date="2001" name="Science">
        <title>Genome sequence of the plant pathogen and biotechnology agent Agrobacterium tumefaciens C58.</title>
        <authorList>
            <person name="Goodner B."/>
            <person name="Hinkle G."/>
            <person name="Gattung S."/>
            <person name="Miller N."/>
            <person name="Blanchard M."/>
            <person name="Qurollo B."/>
            <person name="Goldman B.S."/>
            <person name="Cao Y."/>
            <person name="Askenazi M."/>
            <person name="Halling C."/>
            <person name="Mullin L."/>
            <person name="Houmiel K."/>
            <person name="Gordon J."/>
            <person name="Vaudin M."/>
            <person name="Iartchouk O."/>
            <person name="Epp A."/>
            <person name="Liu F."/>
            <person name="Wollam C."/>
            <person name="Allinger M."/>
            <person name="Doughty D."/>
            <person name="Scott C."/>
            <person name="Lappas C."/>
            <person name="Markelz B."/>
            <person name="Flanagan C."/>
            <person name="Crowell C."/>
            <person name="Gurson J."/>
            <person name="Lomo C."/>
            <person name="Sear C."/>
            <person name="Strub G."/>
            <person name="Cielo C."/>
            <person name="Slater S."/>
        </authorList>
    </citation>
    <scope>NUCLEOTIDE SEQUENCE [LARGE SCALE GENOMIC DNA]</scope>
    <source>
        <strain>C58 / ATCC 33970</strain>
    </source>
</reference>
<gene>
    <name evidence="1" type="primary">kdpB</name>
    <name type="ordered locus">Atu3789</name>
    <name type="ORF">AGR_L_2090</name>
</gene>
<protein>
    <recommendedName>
        <fullName evidence="1">Potassium-transporting ATPase ATP-binding subunit</fullName>
        <ecNumber evidence="1">7.2.2.6</ecNumber>
    </recommendedName>
    <alternativeName>
        <fullName evidence="1">ATP phosphohydrolase [potassium-transporting] B chain</fullName>
    </alternativeName>
    <alternativeName>
        <fullName evidence="1">Potassium-binding and translocating subunit B</fullName>
    </alternativeName>
    <alternativeName>
        <fullName evidence="1">Potassium-translocating ATPase B chain</fullName>
    </alternativeName>
</protein>
<sequence>MSQSKQASILDSRILVPAIADAFKKLNPRTLARNPVMFVVATVSVLTTVLFIRDLITGGANLAFSFQINLWLWFTVLFANFAEAVAEGRGKAQADSLRKTRTETQAKLLNSDDRSQYKMVAGDSLKVNDVVLVEAGDIIPSDGEVIEGVASVNEAAITGESAPVIRESGGDRSAVTGGTQVLSDWIRVRITAAAGSTFLDRMISLVEGAERQKTPNEIALNILLAGMTLIFVLATATIPSFAAYAGGSIPIIVLVALFVTLIPTTIGALLSAIGIAGMDRLVRFNVLAMSGRAVEAAGDVDTLLLDKTGTITLGNRQATDLRPIPGVSEQELADAAQLASLADETPEGRSIVVLAKEKYGIRARDMQKLHATFVPFTAQTRMSGVDFEGASIRKGAVDAVLAYVDGGALQHGNAALALKTETDATRAIRAIAEDIAKAGGTPLAVVRDGKLLGVVQLKDIVKGGIRERFAELRRMGIRTVMITGDNPMTAAAIAAEAGVDDFLAQATPENKLELIREEQAKGKLVAMCGDGTNDAPALAQADVGVAMNTGTVAAREAGNMVDLDSDPTKLIEIVEIGKQLLMTRGALTTFSIANDIAKYFAIIPAMFLALYPQLGVLNVMGLSTPQSAILSAIIFNALIIIALIPLSLKGVKYRPIGAGALLSRNLVIYGLGGIIVPFIGIKLIDLAVTALGLA</sequence>
<name>KDPB_AGRFC</name>
<keyword id="KW-0067">ATP-binding</keyword>
<keyword id="KW-0997">Cell inner membrane</keyword>
<keyword id="KW-1003">Cell membrane</keyword>
<keyword id="KW-0406">Ion transport</keyword>
<keyword id="KW-0460">Magnesium</keyword>
<keyword id="KW-0472">Membrane</keyword>
<keyword id="KW-0479">Metal-binding</keyword>
<keyword id="KW-0547">Nucleotide-binding</keyword>
<keyword id="KW-0597">Phosphoprotein</keyword>
<keyword id="KW-0630">Potassium</keyword>
<keyword id="KW-0633">Potassium transport</keyword>
<keyword id="KW-1185">Reference proteome</keyword>
<keyword id="KW-1278">Translocase</keyword>
<keyword id="KW-0812">Transmembrane</keyword>
<keyword id="KW-1133">Transmembrane helix</keyword>
<keyword id="KW-0813">Transport</keyword>